<feature type="chain" id="PRO_0000378508" description="Zinc finger and BTB domain-containing protein 8A">
    <location>
        <begin position="1"/>
        <end position="441"/>
    </location>
</feature>
<feature type="domain" description="BTB" evidence="1">
    <location>
        <begin position="24"/>
        <end position="92"/>
    </location>
</feature>
<feature type="zinc finger region" description="C2H2-type 1" evidence="2">
    <location>
        <begin position="282"/>
        <end position="304"/>
    </location>
</feature>
<feature type="zinc finger region" description="C2H2-type 2" evidence="2">
    <location>
        <begin position="310"/>
        <end position="333"/>
    </location>
</feature>
<feature type="region of interest" description="Disordered" evidence="3">
    <location>
        <begin position="143"/>
        <end position="251"/>
    </location>
</feature>
<feature type="compositionally biased region" description="Polar residues" evidence="3">
    <location>
        <begin position="143"/>
        <end position="170"/>
    </location>
</feature>
<feature type="compositionally biased region" description="Polar residues" evidence="3">
    <location>
        <begin position="178"/>
        <end position="196"/>
    </location>
</feature>
<feature type="compositionally biased region" description="Basic and acidic residues" evidence="3">
    <location>
        <begin position="198"/>
        <end position="208"/>
    </location>
</feature>
<feature type="compositionally biased region" description="Low complexity" evidence="3">
    <location>
        <begin position="234"/>
        <end position="243"/>
    </location>
</feature>
<feature type="modified residue" description="Phosphoserine" evidence="8">
    <location>
        <position position="161"/>
    </location>
</feature>
<feature type="modified residue" description="Phosphoserine" evidence="7">
    <location>
        <position position="167"/>
    </location>
</feature>
<feature type="cross-link" description="Glycyl lysine isopeptide (Lys-Gly) (interchain with G-Cter in SUMO2)" evidence="12">
    <location>
        <position position="178"/>
    </location>
</feature>
<feature type="cross-link" description="Glycyl lysine isopeptide (Lys-Gly) (interchain with G-Cter in SUMO2)" evidence="12">
    <location>
        <position position="182"/>
    </location>
</feature>
<feature type="cross-link" description="Glycyl lysine isopeptide (Lys-Gly) (interchain with G-Cter in SUMO2)" evidence="12">
    <location>
        <position position="191"/>
    </location>
</feature>
<feature type="cross-link" description="Glycyl lysine isopeptide (Lys-Gly) (interchain with G-Cter in SUMO2)" evidence="10 11 12">
    <location>
        <position position="199"/>
    </location>
</feature>
<feature type="cross-link" description="Glycyl lysine isopeptide (Lys-Gly) (interchain with G-Cter in SUMO2)" evidence="9">
    <location>
        <position position="437"/>
    </location>
</feature>
<feature type="splice variant" id="VSP_037597" description="In isoform 2." evidence="5">
    <original>IHQACKLICRKCKRHVTDLTGQVVQEGTRRYRLCNECLAEFGIDSLPIDLEAEQHLMSPSDGDKDSRWHLSEDENRSYVEIVEDGSADLVIQQVDDSEEEEEKEIKPNIR</original>
    <variation>MEIRIPD</variation>
    <location>
        <begin position="332"/>
        <end position="441"/>
    </location>
</feature>
<feature type="sequence variant" id="VAR_058085" description="In dbSNP:rs704886." evidence="4">
    <original>A</original>
    <variation>G</variation>
    <location>
        <position position="418"/>
    </location>
</feature>
<feature type="sequence conflict" description="In Ref. 5; AAH15067." evidence="6" ref="5">
    <original>S</original>
    <variation>G</variation>
    <location>
        <position position="206"/>
    </location>
</feature>
<protein>
    <recommendedName>
        <fullName>Zinc finger and BTB domain-containing protein 8A</fullName>
    </recommendedName>
    <alternativeName>
        <fullName>BTB/POZ and zinc-finger domain-containing factor</fullName>
    </alternativeName>
    <alternativeName>
        <fullName>BTB/POZ and zinc-finger domains factor on chromosome 1</fullName>
        <shortName>BOZ-F1</shortName>
    </alternativeName>
</protein>
<gene>
    <name type="primary">ZBTB8A</name>
    <name type="synonym">BOZF1</name>
</gene>
<sequence length="441" mass="50155">MEISSHQSHLLQQLNEQRRQDVFCDCSILVEGKVFKAHRNVLFASSGYFKMLLSQNSKETSQPTTATFQAFSPDTFTVILDFVYSGKLSLTGQNVIEVMSAASFLQMTDVISVCKTFIKSSLDISEKEKDRYFSLSDKDANSNGVERSSFYSGGWQEGSSSPRSHLSPEQGTGIISGKSWNKYNYHPASQKNTQQPLAKHEPRKESIKKTKHLRLSQPSEVTHYKSSKREVRTSDSSSHVSQSEEQAQIDAEMDSTPVGYQYGQGSDVTSKSFPDDLPRMRFKCPYCTHVVKRKADLKRHLRCHTGERPYPCQACGKRFSRLDHLSSHFRTIHQACKLICRKCKRHVTDLTGQVVQEGTRRYRLCNECLAEFGIDSLPIDLEAEQHLMSPSDGDKDSRWHLSEDENRSYVEIVEDGSADLVIQQVDDSEEEEEKEIKPNIR</sequence>
<name>ZBT8A_HUMAN</name>
<evidence type="ECO:0000255" key="1">
    <source>
        <dbReference type="PROSITE-ProRule" id="PRU00037"/>
    </source>
</evidence>
<evidence type="ECO:0000255" key="2">
    <source>
        <dbReference type="PROSITE-ProRule" id="PRU00042"/>
    </source>
</evidence>
<evidence type="ECO:0000256" key="3">
    <source>
        <dbReference type="SAM" id="MobiDB-lite"/>
    </source>
</evidence>
<evidence type="ECO:0000269" key="4">
    <source ref="1"/>
</evidence>
<evidence type="ECO:0000303" key="5">
    <source ref="1"/>
</evidence>
<evidence type="ECO:0000305" key="6"/>
<evidence type="ECO:0007744" key="7">
    <source>
    </source>
</evidence>
<evidence type="ECO:0007744" key="8">
    <source>
    </source>
</evidence>
<evidence type="ECO:0007744" key="9">
    <source>
    </source>
</evidence>
<evidence type="ECO:0007744" key="10">
    <source>
    </source>
</evidence>
<evidence type="ECO:0007744" key="11">
    <source>
    </source>
</evidence>
<evidence type="ECO:0007744" key="12">
    <source>
    </source>
</evidence>
<reference key="1">
    <citation type="submission" date="2002-09" db="EMBL/GenBank/DDBJ databases">
        <title>Structure, genomic organization and expression of BOZ-F1.</title>
        <authorList>
            <person name="Goudou D."/>
            <person name="Bitoun M."/>
            <person name="Perin J.P."/>
            <person name="Alliel P.M."/>
        </authorList>
    </citation>
    <scope>NUCLEOTIDE SEQUENCE [MRNA] (ISOFORMS 1 AND 2)</scope>
    <scope>VARIANT GLY-418</scope>
    <source>
        <tissue>Brain</tissue>
    </source>
</reference>
<reference key="2">
    <citation type="journal article" date="2004" name="Nat. Genet.">
        <title>Complete sequencing and characterization of 21,243 full-length human cDNAs.</title>
        <authorList>
            <person name="Ota T."/>
            <person name="Suzuki Y."/>
            <person name="Nishikawa T."/>
            <person name="Otsuki T."/>
            <person name="Sugiyama T."/>
            <person name="Irie R."/>
            <person name="Wakamatsu A."/>
            <person name="Hayashi K."/>
            <person name="Sato H."/>
            <person name="Nagai K."/>
            <person name="Kimura K."/>
            <person name="Makita H."/>
            <person name="Sekine M."/>
            <person name="Obayashi M."/>
            <person name="Nishi T."/>
            <person name="Shibahara T."/>
            <person name="Tanaka T."/>
            <person name="Ishii S."/>
            <person name="Yamamoto J."/>
            <person name="Saito K."/>
            <person name="Kawai Y."/>
            <person name="Isono Y."/>
            <person name="Nakamura Y."/>
            <person name="Nagahari K."/>
            <person name="Murakami K."/>
            <person name="Yasuda T."/>
            <person name="Iwayanagi T."/>
            <person name="Wagatsuma M."/>
            <person name="Shiratori A."/>
            <person name="Sudo H."/>
            <person name="Hosoiri T."/>
            <person name="Kaku Y."/>
            <person name="Kodaira H."/>
            <person name="Kondo H."/>
            <person name="Sugawara M."/>
            <person name="Takahashi M."/>
            <person name="Kanda K."/>
            <person name="Yokoi T."/>
            <person name="Furuya T."/>
            <person name="Kikkawa E."/>
            <person name="Omura Y."/>
            <person name="Abe K."/>
            <person name="Kamihara K."/>
            <person name="Katsuta N."/>
            <person name="Sato K."/>
            <person name="Tanikawa M."/>
            <person name="Yamazaki M."/>
            <person name="Ninomiya K."/>
            <person name="Ishibashi T."/>
            <person name="Yamashita H."/>
            <person name="Murakawa K."/>
            <person name="Fujimori K."/>
            <person name="Tanai H."/>
            <person name="Kimata M."/>
            <person name="Watanabe M."/>
            <person name="Hiraoka S."/>
            <person name="Chiba Y."/>
            <person name="Ishida S."/>
            <person name="Ono Y."/>
            <person name="Takiguchi S."/>
            <person name="Watanabe S."/>
            <person name="Yosida M."/>
            <person name="Hotuta T."/>
            <person name="Kusano J."/>
            <person name="Kanehori K."/>
            <person name="Takahashi-Fujii A."/>
            <person name="Hara H."/>
            <person name="Tanase T.-O."/>
            <person name="Nomura Y."/>
            <person name="Togiya S."/>
            <person name="Komai F."/>
            <person name="Hara R."/>
            <person name="Takeuchi K."/>
            <person name="Arita M."/>
            <person name="Imose N."/>
            <person name="Musashino K."/>
            <person name="Yuuki H."/>
            <person name="Oshima A."/>
            <person name="Sasaki N."/>
            <person name="Aotsuka S."/>
            <person name="Yoshikawa Y."/>
            <person name="Matsunawa H."/>
            <person name="Ichihara T."/>
            <person name="Shiohata N."/>
            <person name="Sano S."/>
            <person name="Moriya S."/>
            <person name="Momiyama H."/>
            <person name="Satoh N."/>
            <person name="Takami S."/>
            <person name="Terashima Y."/>
            <person name="Suzuki O."/>
            <person name="Nakagawa S."/>
            <person name="Senoh A."/>
            <person name="Mizoguchi H."/>
            <person name="Goto Y."/>
            <person name="Shimizu F."/>
            <person name="Wakebe H."/>
            <person name="Hishigaki H."/>
            <person name="Watanabe T."/>
            <person name="Sugiyama A."/>
            <person name="Takemoto M."/>
            <person name="Kawakami B."/>
            <person name="Yamazaki M."/>
            <person name="Watanabe K."/>
            <person name="Kumagai A."/>
            <person name="Itakura S."/>
            <person name="Fukuzumi Y."/>
            <person name="Fujimori Y."/>
            <person name="Komiyama M."/>
            <person name="Tashiro H."/>
            <person name="Tanigami A."/>
            <person name="Fujiwara T."/>
            <person name="Ono T."/>
            <person name="Yamada K."/>
            <person name="Fujii Y."/>
            <person name="Ozaki K."/>
            <person name="Hirao M."/>
            <person name="Ohmori Y."/>
            <person name="Kawabata A."/>
            <person name="Hikiji T."/>
            <person name="Kobatake N."/>
            <person name="Inagaki H."/>
            <person name="Ikema Y."/>
            <person name="Okamoto S."/>
            <person name="Okitani R."/>
            <person name="Kawakami T."/>
            <person name="Noguchi S."/>
            <person name="Itoh T."/>
            <person name="Shigeta K."/>
            <person name="Senba T."/>
            <person name="Matsumura K."/>
            <person name="Nakajima Y."/>
            <person name="Mizuno T."/>
            <person name="Morinaga M."/>
            <person name="Sasaki M."/>
            <person name="Togashi T."/>
            <person name="Oyama M."/>
            <person name="Hata H."/>
            <person name="Watanabe M."/>
            <person name="Komatsu T."/>
            <person name="Mizushima-Sugano J."/>
            <person name="Satoh T."/>
            <person name="Shirai Y."/>
            <person name="Takahashi Y."/>
            <person name="Nakagawa K."/>
            <person name="Okumura K."/>
            <person name="Nagase T."/>
            <person name="Nomura N."/>
            <person name="Kikuchi H."/>
            <person name="Masuho Y."/>
            <person name="Yamashita R."/>
            <person name="Nakai K."/>
            <person name="Yada T."/>
            <person name="Nakamura Y."/>
            <person name="Ohara O."/>
            <person name="Isogai T."/>
            <person name="Sugano S."/>
        </authorList>
    </citation>
    <scope>NUCLEOTIDE SEQUENCE [LARGE SCALE MRNA] (ISOFORM 1)</scope>
    <source>
        <tissue>Embryo</tissue>
    </source>
</reference>
<reference key="3">
    <citation type="journal article" date="2006" name="Nature">
        <title>The DNA sequence and biological annotation of human chromosome 1.</title>
        <authorList>
            <person name="Gregory S.G."/>
            <person name="Barlow K.F."/>
            <person name="McLay K.E."/>
            <person name="Kaul R."/>
            <person name="Swarbreck D."/>
            <person name="Dunham A."/>
            <person name="Scott C.E."/>
            <person name="Howe K.L."/>
            <person name="Woodfine K."/>
            <person name="Spencer C.C.A."/>
            <person name="Jones M.C."/>
            <person name="Gillson C."/>
            <person name="Searle S."/>
            <person name="Zhou Y."/>
            <person name="Kokocinski F."/>
            <person name="McDonald L."/>
            <person name="Evans R."/>
            <person name="Phillips K."/>
            <person name="Atkinson A."/>
            <person name="Cooper R."/>
            <person name="Jones C."/>
            <person name="Hall R.E."/>
            <person name="Andrews T.D."/>
            <person name="Lloyd C."/>
            <person name="Ainscough R."/>
            <person name="Almeida J.P."/>
            <person name="Ambrose K.D."/>
            <person name="Anderson F."/>
            <person name="Andrew R.W."/>
            <person name="Ashwell R.I.S."/>
            <person name="Aubin K."/>
            <person name="Babbage A.K."/>
            <person name="Bagguley C.L."/>
            <person name="Bailey J."/>
            <person name="Beasley H."/>
            <person name="Bethel G."/>
            <person name="Bird C.P."/>
            <person name="Bray-Allen S."/>
            <person name="Brown J.Y."/>
            <person name="Brown A.J."/>
            <person name="Buckley D."/>
            <person name="Burton J."/>
            <person name="Bye J."/>
            <person name="Carder C."/>
            <person name="Chapman J.C."/>
            <person name="Clark S.Y."/>
            <person name="Clarke G."/>
            <person name="Clee C."/>
            <person name="Cobley V."/>
            <person name="Collier R.E."/>
            <person name="Corby N."/>
            <person name="Coville G.J."/>
            <person name="Davies J."/>
            <person name="Deadman R."/>
            <person name="Dunn M."/>
            <person name="Earthrowl M."/>
            <person name="Ellington A.G."/>
            <person name="Errington H."/>
            <person name="Frankish A."/>
            <person name="Frankland J."/>
            <person name="French L."/>
            <person name="Garner P."/>
            <person name="Garnett J."/>
            <person name="Gay L."/>
            <person name="Ghori M.R.J."/>
            <person name="Gibson R."/>
            <person name="Gilby L.M."/>
            <person name="Gillett W."/>
            <person name="Glithero R.J."/>
            <person name="Grafham D.V."/>
            <person name="Griffiths C."/>
            <person name="Griffiths-Jones S."/>
            <person name="Grocock R."/>
            <person name="Hammond S."/>
            <person name="Harrison E.S.I."/>
            <person name="Hart E."/>
            <person name="Haugen E."/>
            <person name="Heath P.D."/>
            <person name="Holmes S."/>
            <person name="Holt K."/>
            <person name="Howden P.J."/>
            <person name="Hunt A.R."/>
            <person name="Hunt S.E."/>
            <person name="Hunter G."/>
            <person name="Isherwood J."/>
            <person name="James R."/>
            <person name="Johnson C."/>
            <person name="Johnson D."/>
            <person name="Joy A."/>
            <person name="Kay M."/>
            <person name="Kershaw J.K."/>
            <person name="Kibukawa M."/>
            <person name="Kimberley A.M."/>
            <person name="King A."/>
            <person name="Knights A.J."/>
            <person name="Lad H."/>
            <person name="Laird G."/>
            <person name="Lawlor S."/>
            <person name="Leongamornlert D.A."/>
            <person name="Lloyd D.M."/>
            <person name="Loveland J."/>
            <person name="Lovell J."/>
            <person name="Lush M.J."/>
            <person name="Lyne R."/>
            <person name="Martin S."/>
            <person name="Mashreghi-Mohammadi M."/>
            <person name="Matthews L."/>
            <person name="Matthews N.S.W."/>
            <person name="McLaren S."/>
            <person name="Milne S."/>
            <person name="Mistry S."/>
            <person name="Moore M.J.F."/>
            <person name="Nickerson T."/>
            <person name="O'Dell C.N."/>
            <person name="Oliver K."/>
            <person name="Palmeiri A."/>
            <person name="Palmer S.A."/>
            <person name="Parker A."/>
            <person name="Patel D."/>
            <person name="Pearce A.V."/>
            <person name="Peck A.I."/>
            <person name="Pelan S."/>
            <person name="Phelps K."/>
            <person name="Phillimore B.J."/>
            <person name="Plumb R."/>
            <person name="Rajan J."/>
            <person name="Raymond C."/>
            <person name="Rouse G."/>
            <person name="Saenphimmachak C."/>
            <person name="Sehra H.K."/>
            <person name="Sheridan E."/>
            <person name="Shownkeen R."/>
            <person name="Sims S."/>
            <person name="Skuce C.D."/>
            <person name="Smith M."/>
            <person name="Steward C."/>
            <person name="Subramanian S."/>
            <person name="Sycamore N."/>
            <person name="Tracey A."/>
            <person name="Tromans A."/>
            <person name="Van Helmond Z."/>
            <person name="Wall M."/>
            <person name="Wallis J.M."/>
            <person name="White S."/>
            <person name="Whitehead S.L."/>
            <person name="Wilkinson J.E."/>
            <person name="Willey D.L."/>
            <person name="Williams H."/>
            <person name="Wilming L."/>
            <person name="Wray P.W."/>
            <person name="Wu Z."/>
            <person name="Coulson A."/>
            <person name="Vaudin M."/>
            <person name="Sulston J.E."/>
            <person name="Durbin R.M."/>
            <person name="Hubbard T."/>
            <person name="Wooster R."/>
            <person name="Dunham I."/>
            <person name="Carter N.P."/>
            <person name="McVean G."/>
            <person name="Ross M.T."/>
            <person name="Harrow J."/>
            <person name="Olson M.V."/>
            <person name="Beck S."/>
            <person name="Rogers J."/>
            <person name="Bentley D.R."/>
        </authorList>
    </citation>
    <scope>NUCLEOTIDE SEQUENCE [LARGE SCALE GENOMIC DNA]</scope>
</reference>
<reference key="4">
    <citation type="submission" date="2005-09" db="EMBL/GenBank/DDBJ databases">
        <authorList>
            <person name="Mural R.J."/>
            <person name="Istrail S."/>
            <person name="Sutton G.G."/>
            <person name="Florea L."/>
            <person name="Halpern A.L."/>
            <person name="Mobarry C.M."/>
            <person name="Lippert R."/>
            <person name="Walenz B."/>
            <person name="Shatkay H."/>
            <person name="Dew I."/>
            <person name="Miller J.R."/>
            <person name="Flanigan M.J."/>
            <person name="Edwards N.J."/>
            <person name="Bolanos R."/>
            <person name="Fasulo D."/>
            <person name="Halldorsson B.V."/>
            <person name="Hannenhalli S."/>
            <person name="Turner R."/>
            <person name="Yooseph S."/>
            <person name="Lu F."/>
            <person name="Nusskern D.R."/>
            <person name="Shue B.C."/>
            <person name="Zheng X.H."/>
            <person name="Zhong F."/>
            <person name="Delcher A.L."/>
            <person name="Huson D.H."/>
            <person name="Kravitz S.A."/>
            <person name="Mouchard L."/>
            <person name="Reinert K."/>
            <person name="Remington K.A."/>
            <person name="Clark A.G."/>
            <person name="Waterman M.S."/>
            <person name="Eichler E.E."/>
            <person name="Adams M.D."/>
            <person name="Hunkapiller M.W."/>
            <person name="Myers E.W."/>
            <person name="Venter J.C."/>
        </authorList>
    </citation>
    <scope>NUCLEOTIDE SEQUENCE [LARGE SCALE GENOMIC DNA]</scope>
</reference>
<reference key="5">
    <citation type="journal article" date="2004" name="Genome Res.">
        <title>The status, quality, and expansion of the NIH full-length cDNA project: the Mammalian Gene Collection (MGC).</title>
        <authorList>
            <consortium name="The MGC Project Team"/>
        </authorList>
    </citation>
    <scope>NUCLEOTIDE SEQUENCE [LARGE SCALE MRNA] (ISOFORM 1)</scope>
    <source>
        <tissue>Prostate</tissue>
        <tissue>Skin</tissue>
        <tissue>Uterus</tissue>
    </source>
</reference>
<reference key="6">
    <citation type="journal article" date="2008" name="Proc. Natl. Acad. Sci. U.S.A.">
        <title>A quantitative atlas of mitotic phosphorylation.</title>
        <authorList>
            <person name="Dephoure N."/>
            <person name="Zhou C."/>
            <person name="Villen J."/>
            <person name="Beausoleil S.A."/>
            <person name="Bakalarski C.E."/>
            <person name="Elledge S.J."/>
            <person name="Gygi S.P."/>
        </authorList>
    </citation>
    <scope>PHOSPHORYLATION [LARGE SCALE ANALYSIS] AT SER-167</scope>
    <scope>IDENTIFICATION BY MASS SPECTROMETRY [LARGE SCALE ANALYSIS]</scope>
    <source>
        <tissue>Cervix carcinoma</tissue>
    </source>
</reference>
<reference key="7">
    <citation type="journal article" date="2009" name="Sci. Signal.">
        <title>Quantitative phosphoproteomic analysis of T cell receptor signaling reveals system-wide modulation of protein-protein interactions.</title>
        <authorList>
            <person name="Mayya V."/>
            <person name="Lundgren D.H."/>
            <person name="Hwang S.-I."/>
            <person name="Rezaul K."/>
            <person name="Wu L."/>
            <person name="Eng J.K."/>
            <person name="Rodionov V."/>
            <person name="Han D.K."/>
        </authorList>
    </citation>
    <scope>PHOSPHORYLATION [LARGE SCALE ANALYSIS] AT SER-161</scope>
    <scope>IDENTIFICATION BY MASS SPECTROMETRY [LARGE SCALE ANALYSIS]</scope>
    <source>
        <tissue>Leukemic T-cell</tissue>
    </source>
</reference>
<reference key="8">
    <citation type="journal article" date="2014" name="Nat. Struct. Mol. Biol.">
        <title>Uncovering global SUMOylation signaling networks in a site-specific manner.</title>
        <authorList>
            <person name="Hendriks I.A."/>
            <person name="D'Souza R.C."/>
            <person name="Yang B."/>
            <person name="Verlaan-de Vries M."/>
            <person name="Mann M."/>
            <person name="Vertegaal A.C."/>
        </authorList>
    </citation>
    <scope>SUMOYLATION [LARGE SCALE ANALYSIS] AT LYS-437</scope>
    <scope>IDENTIFICATION BY MASS SPECTROMETRY [LARGE SCALE ANALYSIS]</scope>
</reference>
<reference key="9">
    <citation type="journal article" date="2015" name="Cell Rep.">
        <title>SUMO-2 orchestrates chromatin modifiers in response to DNA damage.</title>
        <authorList>
            <person name="Hendriks I.A."/>
            <person name="Treffers L.W."/>
            <person name="Verlaan-de Vries M."/>
            <person name="Olsen J.V."/>
            <person name="Vertegaal A.C."/>
        </authorList>
    </citation>
    <scope>SUMOYLATION [LARGE SCALE ANALYSIS] AT LYS-199</scope>
    <scope>IDENTIFICATION BY MASS SPECTROMETRY [LARGE SCALE ANALYSIS]</scope>
</reference>
<reference key="10">
    <citation type="journal article" date="2015" name="Mol. Cell. Proteomics">
        <title>System-wide analysis of SUMOylation dynamics in response to replication stress reveals novel small ubiquitin-like modified target proteins and acceptor lysines relevant for genome stability.</title>
        <authorList>
            <person name="Xiao Z."/>
            <person name="Chang J.G."/>
            <person name="Hendriks I.A."/>
            <person name="Sigurdsson J.O."/>
            <person name="Olsen J.V."/>
            <person name="Vertegaal A.C."/>
        </authorList>
    </citation>
    <scope>SUMOYLATION [LARGE SCALE ANALYSIS] AT LYS-199</scope>
    <scope>IDENTIFICATION BY MASS SPECTROMETRY [LARGE SCALE ANALYSIS]</scope>
</reference>
<reference key="11">
    <citation type="journal article" date="2017" name="Nat. Struct. Mol. Biol.">
        <title>Site-specific mapping of the human SUMO proteome reveals co-modification with phosphorylation.</title>
        <authorList>
            <person name="Hendriks I.A."/>
            <person name="Lyon D."/>
            <person name="Young C."/>
            <person name="Jensen L.J."/>
            <person name="Vertegaal A.C."/>
            <person name="Nielsen M.L."/>
        </authorList>
    </citation>
    <scope>SUMOYLATION [LARGE SCALE ANALYSIS] AT LYS-178; LYS-182; LYS-191 AND LYS-199</scope>
    <scope>IDENTIFICATION BY MASS SPECTROMETRY [LARGE SCALE ANALYSIS]</scope>
</reference>
<keyword id="KW-0025">Alternative splicing</keyword>
<keyword id="KW-0238">DNA-binding</keyword>
<keyword id="KW-1017">Isopeptide bond</keyword>
<keyword id="KW-0479">Metal-binding</keyword>
<keyword id="KW-0539">Nucleus</keyword>
<keyword id="KW-0597">Phosphoprotein</keyword>
<keyword id="KW-1267">Proteomics identification</keyword>
<keyword id="KW-1185">Reference proteome</keyword>
<keyword id="KW-0677">Repeat</keyword>
<keyword id="KW-0804">Transcription</keyword>
<keyword id="KW-0805">Transcription regulation</keyword>
<keyword id="KW-0832">Ubl conjugation</keyword>
<keyword id="KW-0862">Zinc</keyword>
<keyword id="KW-0863">Zinc-finger</keyword>
<proteinExistence type="evidence at protein level"/>
<organism>
    <name type="scientific">Homo sapiens</name>
    <name type="common">Human</name>
    <dbReference type="NCBI Taxonomy" id="9606"/>
    <lineage>
        <taxon>Eukaryota</taxon>
        <taxon>Metazoa</taxon>
        <taxon>Chordata</taxon>
        <taxon>Craniata</taxon>
        <taxon>Vertebrata</taxon>
        <taxon>Euteleostomi</taxon>
        <taxon>Mammalia</taxon>
        <taxon>Eutheria</taxon>
        <taxon>Euarchontoglires</taxon>
        <taxon>Primates</taxon>
        <taxon>Haplorrhini</taxon>
        <taxon>Catarrhini</taxon>
        <taxon>Hominidae</taxon>
        <taxon>Homo</taxon>
    </lineage>
</organism>
<dbReference type="EMBL" id="AF548353">
    <property type="protein sequence ID" value="AAN40800.1"/>
    <property type="molecule type" value="mRNA"/>
</dbReference>
<dbReference type="EMBL" id="AY157873">
    <property type="protein sequence ID" value="AAN77376.1"/>
    <property type="molecule type" value="mRNA"/>
</dbReference>
<dbReference type="EMBL" id="AK074546">
    <property type="protein sequence ID" value="BAC11050.1"/>
    <property type="molecule type" value="mRNA"/>
</dbReference>
<dbReference type="EMBL" id="AL033529">
    <property type="status" value="NOT_ANNOTATED_CDS"/>
    <property type="molecule type" value="Genomic_DNA"/>
</dbReference>
<dbReference type="EMBL" id="CH471059">
    <property type="protein sequence ID" value="EAX07521.1"/>
    <property type="molecule type" value="Genomic_DNA"/>
</dbReference>
<dbReference type="EMBL" id="CH471059">
    <property type="protein sequence ID" value="EAX07522.1"/>
    <property type="molecule type" value="Genomic_DNA"/>
</dbReference>
<dbReference type="EMBL" id="BC015067">
    <property type="protein sequence ID" value="AAH15067.1"/>
    <property type="molecule type" value="mRNA"/>
</dbReference>
<dbReference type="EMBL" id="BC015239">
    <property type="protein sequence ID" value="AAH15239.1"/>
    <property type="molecule type" value="mRNA"/>
</dbReference>
<dbReference type="EMBL" id="BC029654">
    <property type="protein sequence ID" value="AAH29654.1"/>
    <property type="molecule type" value="mRNA"/>
</dbReference>
<dbReference type="CCDS" id="CCDS30664.1">
    <molecule id="Q96BR9-1"/>
</dbReference>
<dbReference type="RefSeq" id="NP_001035531.2">
    <molecule id="Q96BR9-1"/>
    <property type="nucleotide sequence ID" value="NM_001040441.3"/>
</dbReference>
<dbReference type="RefSeq" id="NP_001278425.1">
    <property type="nucleotide sequence ID" value="NM_001291496.1"/>
</dbReference>
<dbReference type="SMR" id="Q96BR9"/>
<dbReference type="BioGRID" id="575543">
    <property type="interactions" value="94"/>
</dbReference>
<dbReference type="FunCoup" id="Q96BR9">
    <property type="interactions" value="729"/>
</dbReference>
<dbReference type="IntAct" id="Q96BR9">
    <property type="interactions" value="81"/>
</dbReference>
<dbReference type="STRING" id="9606.ENSP00000362609"/>
<dbReference type="iPTMnet" id="Q96BR9"/>
<dbReference type="PhosphoSitePlus" id="Q96BR9"/>
<dbReference type="BioMuta" id="ZBTB8A"/>
<dbReference type="DMDM" id="251765171"/>
<dbReference type="jPOST" id="Q96BR9"/>
<dbReference type="MassIVE" id="Q96BR9"/>
<dbReference type="PaxDb" id="9606-ENSP00000362609"/>
<dbReference type="PeptideAtlas" id="Q96BR9"/>
<dbReference type="ProteomicsDB" id="76104">
    <molecule id="Q96BR9-1"/>
</dbReference>
<dbReference type="ProteomicsDB" id="76105">
    <molecule id="Q96BR9-2"/>
</dbReference>
<dbReference type="Antibodypedia" id="31329">
    <property type="antibodies" value="84 antibodies from 23 providers"/>
</dbReference>
<dbReference type="DNASU" id="653121"/>
<dbReference type="Ensembl" id="ENST00000373510.9">
    <molecule id="Q96BR9-1"/>
    <property type="protein sequence ID" value="ENSP00000362609.3"/>
    <property type="gene ID" value="ENSG00000160062.15"/>
</dbReference>
<dbReference type="GeneID" id="653121"/>
<dbReference type="KEGG" id="hsa:653121"/>
<dbReference type="MANE-Select" id="ENST00000373510.9">
    <property type="protein sequence ID" value="ENSP00000362609.3"/>
    <property type="RefSeq nucleotide sequence ID" value="NM_001040441.3"/>
    <property type="RefSeq protein sequence ID" value="NP_001035531.2"/>
</dbReference>
<dbReference type="UCSC" id="uc001bvn.4">
    <molecule id="Q96BR9-1"/>
    <property type="organism name" value="human"/>
</dbReference>
<dbReference type="AGR" id="HGNC:24172"/>
<dbReference type="CTD" id="653121"/>
<dbReference type="GeneCards" id="ZBTB8A"/>
<dbReference type="HGNC" id="HGNC:24172">
    <property type="gene designation" value="ZBTB8A"/>
</dbReference>
<dbReference type="HPA" id="ENSG00000160062">
    <property type="expression patterns" value="Low tissue specificity"/>
</dbReference>
<dbReference type="MIM" id="618742">
    <property type="type" value="gene"/>
</dbReference>
<dbReference type="neXtProt" id="NX_Q96BR9"/>
<dbReference type="OpenTargets" id="ENSG00000160062"/>
<dbReference type="PharmGKB" id="PA164727627"/>
<dbReference type="VEuPathDB" id="HostDB:ENSG00000160062"/>
<dbReference type="eggNOG" id="KOG1721">
    <property type="taxonomic scope" value="Eukaryota"/>
</dbReference>
<dbReference type="GeneTree" id="ENSGT00940000157491"/>
<dbReference type="HOGENOM" id="CLU_022356_1_1_1"/>
<dbReference type="InParanoid" id="Q96BR9"/>
<dbReference type="OMA" id="DMDSTPV"/>
<dbReference type="OrthoDB" id="624345at2759"/>
<dbReference type="PAN-GO" id="Q96BR9">
    <property type="GO annotations" value="3 GO annotations based on evolutionary models"/>
</dbReference>
<dbReference type="PhylomeDB" id="Q96BR9"/>
<dbReference type="TreeFam" id="TF330979"/>
<dbReference type="PathwayCommons" id="Q96BR9"/>
<dbReference type="SignaLink" id="Q96BR9"/>
<dbReference type="SIGNOR" id="Q96BR9"/>
<dbReference type="BioGRID-ORCS" id="653121">
    <property type="hits" value="7 hits in 1209 CRISPR screens"/>
</dbReference>
<dbReference type="ChiTaRS" id="ZBTB8A">
    <property type="organism name" value="human"/>
</dbReference>
<dbReference type="GenomeRNAi" id="653121"/>
<dbReference type="Pharos" id="Q96BR9">
    <property type="development level" value="Tdark"/>
</dbReference>
<dbReference type="PRO" id="PR:Q96BR9"/>
<dbReference type="Proteomes" id="UP000005640">
    <property type="component" value="Chromosome 1"/>
</dbReference>
<dbReference type="RNAct" id="Q96BR9">
    <property type="molecule type" value="protein"/>
</dbReference>
<dbReference type="Bgee" id="ENSG00000160062">
    <property type="expression patterns" value="Expressed in primordial germ cell in gonad and 101 other cell types or tissues"/>
</dbReference>
<dbReference type="ExpressionAtlas" id="Q96BR9">
    <property type="expression patterns" value="baseline and differential"/>
</dbReference>
<dbReference type="GO" id="GO:0005634">
    <property type="term" value="C:nucleus"/>
    <property type="evidence" value="ECO:0007669"/>
    <property type="project" value="UniProtKB-SubCell"/>
</dbReference>
<dbReference type="GO" id="GO:0000981">
    <property type="term" value="F:DNA-binding transcription factor activity, RNA polymerase II-specific"/>
    <property type="evidence" value="ECO:0000318"/>
    <property type="project" value="GO_Central"/>
</dbReference>
<dbReference type="GO" id="GO:0001227">
    <property type="term" value="F:DNA-binding transcription repressor activity, RNA polymerase II-specific"/>
    <property type="evidence" value="ECO:0000314"/>
    <property type="project" value="ARUK-UCL"/>
</dbReference>
<dbReference type="GO" id="GO:0000978">
    <property type="term" value="F:RNA polymerase II cis-regulatory region sequence-specific DNA binding"/>
    <property type="evidence" value="ECO:0000318"/>
    <property type="project" value="GO_Central"/>
</dbReference>
<dbReference type="GO" id="GO:0061629">
    <property type="term" value="F:RNA polymerase II-specific DNA-binding transcription factor binding"/>
    <property type="evidence" value="ECO:0000353"/>
    <property type="project" value="ARUK-UCL"/>
</dbReference>
<dbReference type="GO" id="GO:0000976">
    <property type="term" value="F:transcription cis-regulatory region binding"/>
    <property type="evidence" value="ECO:0000314"/>
    <property type="project" value="ARUK-UCL"/>
</dbReference>
<dbReference type="GO" id="GO:0001223">
    <property type="term" value="F:transcription coactivator binding"/>
    <property type="evidence" value="ECO:0000353"/>
    <property type="project" value="ARUK-UCL"/>
</dbReference>
<dbReference type="GO" id="GO:0008270">
    <property type="term" value="F:zinc ion binding"/>
    <property type="evidence" value="ECO:0007669"/>
    <property type="project" value="UniProtKB-KW"/>
</dbReference>
<dbReference type="GO" id="GO:0000122">
    <property type="term" value="P:negative regulation of transcription by RNA polymerase II"/>
    <property type="evidence" value="ECO:0000314"/>
    <property type="project" value="ARUK-UCL"/>
</dbReference>
<dbReference type="GO" id="GO:0006357">
    <property type="term" value="P:regulation of transcription by RNA polymerase II"/>
    <property type="evidence" value="ECO:0000318"/>
    <property type="project" value="GO_Central"/>
</dbReference>
<dbReference type="CDD" id="cd18329">
    <property type="entry name" value="BTB_POZ_ZBTB8A_BOZF1"/>
    <property type="match status" value="1"/>
</dbReference>
<dbReference type="FunFam" id="3.30.160.60:FF:000218">
    <property type="entry name" value="Zinc finger protein 10"/>
    <property type="match status" value="1"/>
</dbReference>
<dbReference type="Gene3D" id="3.30.160.60">
    <property type="entry name" value="Classic Zinc Finger"/>
    <property type="match status" value="2"/>
</dbReference>
<dbReference type="Gene3D" id="3.30.710.10">
    <property type="entry name" value="Potassium Channel Kv1.1, Chain A"/>
    <property type="match status" value="1"/>
</dbReference>
<dbReference type="InterPro" id="IPR000210">
    <property type="entry name" value="BTB/POZ_dom"/>
</dbReference>
<dbReference type="InterPro" id="IPR011333">
    <property type="entry name" value="SKP1/BTB/POZ_sf"/>
</dbReference>
<dbReference type="InterPro" id="IPR036236">
    <property type="entry name" value="Znf_C2H2_sf"/>
</dbReference>
<dbReference type="InterPro" id="IPR013087">
    <property type="entry name" value="Znf_C2H2_type"/>
</dbReference>
<dbReference type="InterPro" id="IPR050457">
    <property type="entry name" value="ZnFinger_BTB_dom_contain"/>
</dbReference>
<dbReference type="PANTHER" id="PTHR46105">
    <property type="entry name" value="AGAP004733-PA"/>
    <property type="match status" value="1"/>
</dbReference>
<dbReference type="PANTHER" id="PTHR46105:SF12">
    <property type="entry name" value="ZINC FINGER AND BTB DOMAIN-CONTAINING PROTEIN 8A"/>
    <property type="match status" value="1"/>
</dbReference>
<dbReference type="Pfam" id="PF00651">
    <property type="entry name" value="BTB"/>
    <property type="match status" value="1"/>
</dbReference>
<dbReference type="Pfam" id="PF00096">
    <property type="entry name" value="zf-C2H2"/>
    <property type="match status" value="2"/>
</dbReference>
<dbReference type="SMART" id="SM00225">
    <property type="entry name" value="BTB"/>
    <property type="match status" value="1"/>
</dbReference>
<dbReference type="SMART" id="SM00355">
    <property type="entry name" value="ZnF_C2H2"/>
    <property type="match status" value="2"/>
</dbReference>
<dbReference type="SUPFAM" id="SSF57667">
    <property type="entry name" value="beta-beta-alpha zinc fingers"/>
    <property type="match status" value="1"/>
</dbReference>
<dbReference type="SUPFAM" id="SSF54695">
    <property type="entry name" value="POZ domain"/>
    <property type="match status" value="1"/>
</dbReference>
<dbReference type="PROSITE" id="PS50097">
    <property type="entry name" value="BTB"/>
    <property type="match status" value="1"/>
</dbReference>
<dbReference type="PROSITE" id="PS00028">
    <property type="entry name" value="ZINC_FINGER_C2H2_1"/>
    <property type="match status" value="2"/>
</dbReference>
<dbReference type="PROSITE" id="PS50157">
    <property type="entry name" value="ZINC_FINGER_C2H2_2"/>
    <property type="match status" value="2"/>
</dbReference>
<accession>Q96BR9</accession>
<accession>Q8IUL5</accession>
<accession>Q8IWR9</accession>
<accession>Q8N2Y5</accession>
<accession>Q96BX0</accession>
<comment type="function">
    <text>May be involved in transcriptional regulation.</text>
</comment>
<comment type="interaction">
    <interactant intactId="EBI-742740">
        <id>Q96BR9</id>
    </interactant>
    <interactant intactId="EBI-11954993">
        <id>Q8WYK0</id>
        <label>ACOT12</label>
    </interactant>
    <organismsDiffer>false</organismsDiffer>
    <experiments>5</experiments>
</comment>
<comment type="interaction">
    <interactant intactId="EBI-742740">
        <id>Q96BR9</id>
    </interactant>
    <interactant intactId="EBI-8637627">
        <id>Q8WTP8</id>
        <label>AEN</label>
    </interactant>
    <organismsDiffer>false</organismsDiffer>
    <experiments>3</experiments>
</comment>
<comment type="interaction">
    <interactant intactId="EBI-742740">
        <id>Q96BR9</id>
    </interactant>
    <interactant intactId="EBI-541426">
        <id>Q9BXS5</id>
        <label>AP1M1</label>
    </interactant>
    <organismsDiffer>false</organismsDiffer>
    <experiments>7</experiments>
</comment>
<comment type="interaction">
    <interactant intactId="EBI-742740">
        <id>Q96BR9</id>
    </interactant>
    <interactant intactId="EBI-742909">
        <id>Q9H6L4</id>
        <label>ARMC7</label>
    </interactant>
    <organismsDiffer>false</organismsDiffer>
    <experiments>3</experiments>
</comment>
<comment type="interaction">
    <interactant intactId="EBI-742740">
        <id>Q96BR9</id>
    </interactant>
    <interactant intactId="EBI-2843626">
        <id>Q9P291</id>
        <label>ARMCX1</label>
    </interactant>
    <organismsDiffer>false</organismsDiffer>
    <experiments>6</experiments>
</comment>
<comment type="interaction">
    <interactant intactId="EBI-742740">
        <id>Q96BR9</id>
    </interactant>
    <interactant intactId="EBI-10321972">
        <id>Q9UIF8-2</id>
        <label>BAZ2B</label>
    </interactant>
    <organismsDiffer>false</organismsDiffer>
    <experiments>3</experiments>
</comment>
<comment type="interaction">
    <interactant intactId="EBI-742740">
        <id>Q96BR9</id>
    </interactant>
    <interactant intactId="EBI-2105445">
        <id>P51451</id>
        <label>BLK</label>
    </interactant>
    <organismsDiffer>false</organismsDiffer>
    <experiments>3</experiments>
</comment>
<comment type="interaction">
    <interactant intactId="EBI-742740">
        <id>Q96BR9</id>
    </interactant>
    <interactant intactId="EBI-358049">
        <id>Q13895</id>
        <label>BYSL</label>
    </interactant>
    <organismsDiffer>false</organismsDiffer>
    <experiments>8</experiments>
</comment>
<comment type="interaction">
    <interactant intactId="EBI-742740">
        <id>Q96BR9</id>
    </interactant>
    <interactant intactId="EBI-712912">
        <id>Q9HC52</id>
        <label>CBX8</label>
    </interactant>
    <organismsDiffer>false</organismsDiffer>
    <experiments>3</experiments>
</comment>
<comment type="interaction">
    <interactant intactId="EBI-742740">
        <id>Q96BR9</id>
    </interactant>
    <interactant intactId="EBI-295634">
        <id>Q16543</id>
        <label>CDC37</label>
    </interactant>
    <organismsDiffer>false</organismsDiffer>
    <experiments>3</experiments>
</comment>
<comment type="interaction">
    <interactant intactId="EBI-742740">
        <id>Q96BR9</id>
    </interactant>
    <interactant intactId="EBI-3919850">
        <id>Q8IVW4</id>
        <label>CDKL3</label>
    </interactant>
    <organismsDiffer>false</organismsDiffer>
    <experiments>6</experiments>
</comment>
<comment type="interaction">
    <interactant intactId="EBI-742740">
        <id>Q96BR9</id>
    </interactant>
    <interactant intactId="EBI-751621">
        <id>P48730</id>
        <label>CSNK1D</label>
    </interactant>
    <organismsDiffer>false</organismsDiffer>
    <experiments>3</experiments>
</comment>
<comment type="interaction">
    <interactant intactId="EBI-742740">
        <id>Q96BR9</id>
    </interactant>
    <interactant intactId="EBI-5453285">
        <id>Q2TBE0</id>
        <label>CWF19L2</label>
    </interactant>
    <organismsDiffer>false</organismsDiffer>
    <experiments>3</experiments>
</comment>
<comment type="interaction">
    <interactant intactId="EBI-742740">
        <id>Q96BR9</id>
    </interactant>
    <interactant intactId="EBI-351257">
        <id>P26196</id>
        <label>DDX6</label>
    </interactant>
    <organismsDiffer>false</organismsDiffer>
    <experiments>6</experiments>
</comment>
<comment type="interaction">
    <interactant intactId="EBI-742740">
        <id>Q96BR9</id>
    </interactant>
    <interactant intactId="EBI-739789">
        <id>Q92997</id>
        <label>DVL3</label>
    </interactant>
    <organismsDiffer>false</organismsDiffer>
    <experiments>3</experiments>
</comment>
<comment type="interaction">
    <interactant intactId="EBI-742740">
        <id>Q96BR9</id>
    </interactant>
    <interactant intactId="EBI-2339219">
        <id>Q08426</id>
        <label>EHHADH</label>
    </interactant>
    <organismsDiffer>false</organismsDiffer>
    <experiments>3</experiments>
</comment>
<comment type="interaction">
    <interactant intactId="EBI-742740">
        <id>Q96BR9</id>
    </interactant>
    <interactant intactId="EBI-750700">
        <id>Q8N9N8</id>
        <label>EIF1AD</label>
    </interactant>
    <organismsDiffer>false</organismsDiffer>
    <experiments>6</experiments>
</comment>
<comment type="interaction">
    <interactant intactId="EBI-742740">
        <id>Q96BR9</id>
    </interactant>
    <interactant intactId="EBI-719941">
        <id>Q3B820</id>
        <label>FAM161A</label>
    </interactant>
    <organismsDiffer>false</organismsDiffer>
    <experiments>6</experiments>
</comment>
<comment type="interaction">
    <interactant intactId="EBI-742740">
        <id>Q96BR9</id>
    </interactant>
    <interactant intactId="EBI-6658203">
        <id>Q86YD7</id>
        <label>FAM90A1</label>
    </interactant>
    <organismsDiffer>false</organismsDiffer>
    <experiments>3</experiments>
</comment>
<comment type="interaction">
    <interactant intactId="EBI-742740">
        <id>Q96BR9</id>
    </interactant>
    <interactant intactId="EBI-5666657">
        <id>Q9NWQ4</id>
        <label>GPATCH2L</label>
    </interactant>
    <organismsDiffer>false</organismsDiffer>
    <experiments>3</experiments>
</comment>
<comment type="interaction">
    <interactant intactId="EBI-742740">
        <id>Q96BR9</id>
    </interactant>
    <interactant intactId="EBI-10330057">
        <id>V9HW29</id>
        <label>HEL-S-61</label>
    </interactant>
    <organismsDiffer>false</organismsDiffer>
    <experiments>3</experiments>
</comment>
<comment type="interaction">
    <interactant intactId="EBI-742740">
        <id>Q96BR9</id>
    </interactant>
    <interactant intactId="EBI-726282">
        <id>Q96JB3</id>
        <label>HIC2</label>
    </interactant>
    <organismsDiffer>false</organismsDiffer>
    <experiments>5</experiments>
</comment>
<comment type="interaction">
    <interactant intactId="EBI-742740">
        <id>Q96BR9</id>
    </interactant>
    <interactant intactId="EBI-17181882">
        <id>O75564-2</id>
        <label>JRK</label>
    </interactant>
    <organismsDiffer>false</organismsDiffer>
    <experiments>3</experiments>
</comment>
<comment type="interaction">
    <interactant intactId="EBI-742740">
        <id>Q96BR9</id>
    </interactant>
    <interactant intactId="EBI-399080">
        <id>Q92993</id>
        <label>KAT5</label>
    </interactant>
    <organismsDiffer>false</organismsDiffer>
    <experiments>4</experiments>
</comment>
<comment type="interaction">
    <interactant intactId="EBI-742740">
        <id>Q96BR9</id>
    </interactant>
    <interactant intactId="EBI-355878">
        <id>P33176</id>
        <label>KIF5B</label>
    </interactant>
    <organismsDiffer>false</organismsDiffer>
    <experiments>3</experiments>
</comment>
<comment type="interaction">
    <interactant intactId="EBI-742740">
        <id>Q96BR9</id>
    </interactant>
    <interactant intactId="EBI-8472129">
        <id>Q9HAQ2</id>
        <label>KIF9</label>
    </interactant>
    <organismsDiffer>false</organismsDiffer>
    <experiments>3</experiments>
</comment>
<comment type="interaction">
    <interactant intactId="EBI-742740">
        <id>Q96BR9</id>
    </interactant>
    <interactant intactId="EBI-2125614">
        <id>Q9BVG8</id>
        <label>KIFC3</label>
    </interactant>
    <organismsDiffer>false</organismsDiffer>
    <experiments>3</experiments>
</comment>
<comment type="interaction">
    <interactant intactId="EBI-742740">
        <id>Q96BR9</id>
    </interactant>
    <interactant intactId="EBI-14069005">
        <id>Q9BVG8-5</id>
        <label>KIFC3</label>
    </interactant>
    <organismsDiffer>false</organismsDiffer>
    <experiments>3</experiments>
</comment>
<comment type="interaction">
    <interactant intactId="EBI-742740">
        <id>Q96BR9</id>
    </interactant>
    <interactant intactId="EBI-10274069">
        <id>Q8TCE9</id>
        <label>LGALS14</label>
    </interactant>
    <organismsDiffer>false</organismsDiffer>
    <experiments>3</experiments>
</comment>
<comment type="interaction">
    <interactant intactId="EBI-742740">
        <id>Q96BR9</id>
    </interactant>
    <interactant intactId="EBI-1048159">
        <id>P55081</id>
        <label>MFAP1</label>
    </interactant>
    <organismsDiffer>false</organismsDiffer>
    <experiments>3</experiments>
</comment>
<comment type="interaction">
    <interactant intactId="EBI-742740">
        <id>Q96BR9</id>
    </interactant>
    <interactant intactId="EBI-5453723">
        <id>Q9Y3B7</id>
        <label>MRPL11</label>
    </interactant>
    <organismsDiffer>false</organismsDiffer>
    <experiments>3</experiments>
</comment>
<comment type="interaction">
    <interactant intactId="EBI-742740">
        <id>Q96BR9</id>
    </interactant>
    <interactant intactId="EBI-7950783">
        <id>Q96JP2</id>
        <label>MYO15B</label>
    </interactant>
    <organismsDiffer>false</organismsDiffer>
    <experiments>3</experiments>
</comment>
<comment type="interaction">
    <interactant intactId="EBI-742740">
        <id>Q96BR9</id>
    </interactant>
    <interactant intactId="EBI-741158">
        <id>Q96HA8</id>
        <label>NTAQ1</label>
    </interactant>
    <organismsDiffer>false</organismsDiffer>
    <experiments>3</experiments>
</comment>
<comment type="interaction">
    <interactant intactId="EBI-742740">
        <id>Q96BR9</id>
    </interactant>
    <interactant intactId="EBI-348555">
        <id>O75928</id>
        <label>PIAS2</label>
    </interactant>
    <organismsDiffer>false</organismsDiffer>
    <experiments>3</experiments>
</comment>
<comment type="interaction">
    <interactant intactId="EBI-742740">
        <id>Q96BR9</id>
    </interactant>
    <interactant intactId="EBI-1383852">
        <id>P54646</id>
        <label>PRKAA2</label>
    </interactant>
    <organismsDiffer>false</organismsDiffer>
    <experiments>3</experiments>
</comment>
<comment type="interaction">
    <interactant intactId="EBI-742740">
        <id>Q96BR9</id>
    </interactant>
    <interactant intactId="EBI-11959565">
        <id>Q9NV39</id>
        <label>PRR34</label>
    </interactant>
    <organismsDiffer>false</organismsDiffer>
    <experiments>3</experiments>
</comment>
<comment type="interaction">
    <interactant intactId="EBI-742740">
        <id>Q96BR9</id>
    </interactant>
    <interactant intactId="EBI-357598">
        <id>P62191</id>
        <label>PSMC1</label>
    </interactant>
    <organismsDiffer>false</organismsDiffer>
    <experiments>3</experiments>
</comment>
<comment type="interaction">
    <interactant intactId="EBI-742740">
        <id>Q96BR9</id>
    </interactant>
    <interactant intactId="EBI-746453">
        <id>P54725</id>
        <label>RAD23A</label>
    </interactant>
    <organismsDiffer>false</organismsDiffer>
    <experiments>6</experiments>
</comment>
<comment type="interaction">
    <interactant intactId="EBI-742740">
        <id>Q96BR9</id>
    </interactant>
    <interactant intactId="EBI-358122">
        <id>P32969</id>
        <label>RPL9P9</label>
    </interactant>
    <organismsDiffer>false</organismsDiffer>
    <experiments>6</experiments>
</comment>
<comment type="interaction">
    <interactant intactId="EBI-742740">
        <id>Q96BR9</id>
    </interactant>
    <interactant intactId="EBI-727004">
        <id>O00560</id>
        <label>SDCBP</label>
    </interactant>
    <organismsDiffer>false</organismsDiffer>
    <experiments>6</experiments>
</comment>
<comment type="interaction">
    <interactant intactId="EBI-742740">
        <id>Q96BR9</id>
    </interactant>
    <interactant intactId="EBI-10246152">
        <id>Q5T7P8-2</id>
        <label>SYT6</label>
    </interactant>
    <organismsDiffer>false</organismsDiffer>
    <experiments>3</experiments>
</comment>
<comment type="interaction">
    <interactant intactId="EBI-742740">
        <id>Q96BR9</id>
    </interactant>
    <interactant intactId="EBI-710310">
        <id>Q15560</id>
        <label>TCEA2</label>
    </interactant>
    <organismsDiffer>false</organismsDiffer>
    <experiments>3</experiments>
</comment>
<comment type="interaction">
    <interactant intactId="EBI-742740">
        <id>Q96BR9</id>
    </interactant>
    <interactant intactId="EBI-2509913">
        <id>Q96KP6</id>
        <label>TNIP3</label>
    </interactant>
    <organismsDiffer>false</organismsDiffer>
    <experiments>3</experiments>
</comment>
<comment type="interaction">
    <interactant intactId="EBI-742740">
        <id>Q96BR9</id>
    </interactant>
    <interactant intactId="EBI-725997">
        <id>Q8WV44</id>
        <label>TRIM41</label>
    </interactant>
    <organismsDiffer>false</organismsDiffer>
    <experiments>4</experiments>
</comment>
<comment type="interaction">
    <interactant intactId="EBI-742740">
        <id>Q96BR9</id>
    </interactant>
    <interactant intactId="EBI-10180829">
        <id>Q7KZS0</id>
        <label>UBE2I</label>
    </interactant>
    <organismsDiffer>false</organismsDiffer>
    <experiments>3</experiments>
</comment>
<comment type="interaction">
    <interactant intactId="EBI-742740">
        <id>Q96BR9</id>
    </interactant>
    <interactant intactId="EBI-515331">
        <id>P07947</id>
        <label>YES1</label>
    </interactant>
    <organismsDiffer>false</organismsDiffer>
    <experiments>6</experiments>
</comment>
<comment type="interaction">
    <interactant intactId="EBI-742740">
        <id>Q96BR9</id>
    </interactant>
    <interactant intactId="EBI-372156">
        <id>Q13105</id>
        <label>ZBTB17</label>
    </interactant>
    <organismsDiffer>false</organismsDiffer>
    <experiments>3</experiments>
</comment>
<comment type="interaction">
    <interactant intactId="EBI-742740">
        <id>Q96BR9</id>
    </interactant>
    <interactant intactId="EBI-744471">
        <id>O43167</id>
        <label>ZBTB24</label>
    </interactant>
    <organismsDiffer>false</organismsDiffer>
    <experiments>6</experiments>
</comment>
<comment type="interaction">
    <interactant intactId="EBI-742740">
        <id>Q96BR9</id>
    </interactant>
    <interactant intactId="EBI-744864">
        <id>P10074</id>
        <label>ZBTB48</label>
    </interactant>
    <organismsDiffer>false</organismsDiffer>
    <experiments>7</experiments>
</comment>
<comment type="interaction">
    <interactant intactId="EBI-742740">
        <id>Q96BR9</id>
    </interactant>
    <interactant intactId="EBI-2859943">
        <id>Q6ZSB9</id>
        <label>ZBTB49</label>
    </interactant>
    <organismsDiffer>false</organismsDiffer>
    <experiments>6</experiments>
</comment>
<comment type="interaction">
    <interactant intactId="EBI-742740">
        <id>Q96BR9</id>
    </interactant>
    <interactant intactId="EBI-597063">
        <id>Q8TBK6</id>
        <label>ZCCHC10</label>
    </interactant>
    <organismsDiffer>false</organismsDiffer>
    <experiments>3</experiments>
</comment>
<comment type="interaction">
    <interactant intactId="EBI-742740">
        <id>Q96BR9</id>
    </interactant>
    <interactant intactId="EBI-16428984">
        <id>A0A0S2Z6H0</id>
        <label>ZGPAT</label>
    </interactant>
    <organismsDiffer>false</organismsDiffer>
    <experiments>3</experiments>
</comment>
<comment type="interaction">
    <interactant intactId="EBI-742740">
        <id>Q96BR9</id>
    </interactant>
    <interactant intactId="EBI-3439227">
        <id>Q8N5A5</id>
        <label>ZGPAT</label>
    </interactant>
    <organismsDiffer>false</organismsDiffer>
    <experiments>3</experiments>
</comment>
<comment type="interaction">
    <interactant intactId="EBI-742740">
        <id>Q96BR9</id>
    </interactant>
    <interactant intactId="EBI-2682299">
        <id>Q96NC0</id>
        <label>ZMAT2</label>
    </interactant>
    <organismsDiffer>false</organismsDiffer>
    <experiments>3</experiments>
</comment>
<comment type="interaction">
    <interactant intactId="EBI-742740">
        <id>Q96BR9</id>
    </interactant>
    <interactant intactId="EBI-10746567">
        <id>P52744</id>
        <label>ZNF138</label>
    </interactant>
    <organismsDiffer>false</organismsDiffer>
    <experiments>3</experiments>
</comment>
<comment type="interaction">
    <interactant intactId="EBI-742740">
        <id>Q96BR9</id>
    </interactant>
    <interactant intactId="EBI-10213071">
        <id>P52744-2</id>
        <label>ZNF138</label>
    </interactant>
    <organismsDiffer>false</organismsDiffer>
    <experiments>3</experiments>
</comment>
<comment type="interaction">
    <interactant intactId="EBI-742740">
        <id>Q96BR9</id>
    </interactant>
    <interactant intactId="EBI-10177272">
        <id>P15622-3</id>
        <label>ZNF250</label>
    </interactant>
    <organismsDiffer>false</organismsDiffer>
    <experiments>3</experiments>
</comment>
<comment type="interaction">
    <interactant intactId="EBI-742740">
        <id>Q96BR9</id>
    </interactant>
    <interactant intactId="EBI-750821">
        <id>Q8N554</id>
        <label>ZNF276</label>
    </interactant>
    <organismsDiffer>false</organismsDiffer>
    <experiments>7</experiments>
</comment>
<comment type="interaction">
    <interactant intactId="EBI-742740">
        <id>Q96BR9</id>
    </interactant>
    <interactant intactId="EBI-10265849">
        <id>Q8N554-2</id>
        <label>ZNF276</label>
    </interactant>
    <organismsDiffer>false</organismsDiffer>
    <experiments>3</experiments>
</comment>
<comment type="interaction">
    <interactant intactId="EBI-742740">
        <id>Q96BR9</id>
    </interactant>
    <interactant intactId="EBI-7233259">
        <id>Q86UD4</id>
        <label>ZNF329</label>
    </interactant>
    <organismsDiffer>false</organismsDiffer>
    <experiments>3</experiments>
</comment>
<comment type="interaction">
    <interactant intactId="EBI-742740">
        <id>Q96BR9</id>
    </interactant>
    <interactant intactId="EBI-11041653">
        <id>P13682</id>
        <label>ZNF35</label>
    </interactant>
    <organismsDiffer>false</organismsDiffer>
    <experiments>3</experiments>
</comment>
<comment type="interaction">
    <interactant intactId="EBI-742740">
        <id>Q96BR9</id>
    </interactant>
    <interactant intactId="EBI-347633">
        <id>Q9H9D4</id>
        <label>ZNF408</label>
    </interactant>
    <organismsDiffer>false</organismsDiffer>
    <experiments>4</experiments>
</comment>
<comment type="interaction">
    <interactant intactId="EBI-742740">
        <id>Q96BR9</id>
    </interactant>
    <interactant intactId="EBI-740727">
        <id>Q8TAU3</id>
        <label>ZNF417</label>
    </interactant>
    <organismsDiffer>false</organismsDiffer>
    <experiments>6</experiments>
</comment>
<comment type="interaction">
    <interactant intactId="EBI-742740">
        <id>Q96BR9</id>
    </interactant>
    <interactant intactId="EBI-11962468">
        <id>Q7Z4V0</id>
        <label>ZNF438</label>
    </interactant>
    <organismsDiffer>false</organismsDiffer>
    <experiments>3</experiments>
</comment>
<comment type="interaction">
    <interactant intactId="EBI-742740">
        <id>Q96BR9</id>
    </interactant>
    <interactant intactId="EBI-10486136">
        <id>Q6ZNH5</id>
        <label>ZNF497</label>
    </interactant>
    <organismsDiffer>false</organismsDiffer>
    <experiments>3</experiments>
</comment>
<comment type="interaction">
    <interactant intactId="EBI-742740">
        <id>Q96BR9</id>
    </interactant>
    <interactant intactId="EBI-10239929">
        <id>Q32MK9</id>
        <label>ZNF509</label>
    </interactant>
    <organismsDiffer>false</organismsDiffer>
    <experiments>3</experiments>
</comment>
<comment type="interaction">
    <interactant intactId="EBI-742740">
        <id>Q96BR9</id>
    </interactant>
    <interactant intactId="EBI-10172590">
        <id>Q7Z3I7</id>
        <label>ZNF572</label>
    </interactant>
    <organismsDiffer>false</organismsDiffer>
    <experiments>3</experiments>
</comment>
<comment type="interaction">
    <interactant intactId="EBI-742740">
        <id>Q96BR9</id>
    </interactant>
    <interactant intactId="EBI-6427977">
        <id>Q96SQ5</id>
        <label>ZNF587</label>
    </interactant>
    <organismsDiffer>false</organismsDiffer>
    <experiments>6</experiments>
</comment>
<comment type="interaction">
    <interactant intactId="EBI-742740">
        <id>Q96BR9</id>
    </interactant>
    <interactant intactId="EBI-11985915">
        <id>Q5T619</id>
        <label>ZNF648</label>
    </interactant>
    <organismsDiffer>false</organismsDiffer>
    <experiments>3</experiments>
</comment>
<comment type="interaction">
    <interactant intactId="EBI-742740">
        <id>Q96BR9</id>
    </interactant>
    <interactant intactId="EBI-11962574">
        <id>Q96EG3</id>
        <label>ZNF837</label>
    </interactant>
    <organismsDiffer>false</organismsDiffer>
    <experiments>3</experiments>
</comment>
<comment type="interaction">
    <interactant intactId="EBI-742740">
        <id>Q96BR9</id>
    </interactant>
    <interactant intactId="EBI-10174671">
        <id>A8K932</id>
    </interactant>
    <organismsDiffer>false</organismsDiffer>
    <experiments>3</experiments>
</comment>
<comment type="interaction">
    <interactant intactId="EBI-742740">
        <id>Q96BR9</id>
    </interactant>
    <interactant intactId="EBI-10315029">
        <id>Q9NWJ2</id>
    </interactant>
    <organismsDiffer>false</organismsDiffer>
    <experiments>3</experiments>
</comment>
<comment type="subcellular location">
    <subcellularLocation>
        <location evidence="6">Nucleus</location>
    </subcellularLocation>
</comment>
<comment type="alternative products">
    <event type="alternative splicing"/>
    <isoform>
        <id>Q96BR9-1</id>
        <name>1</name>
        <sequence type="displayed"/>
    </isoform>
    <isoform>
        <id>Q96BR9-2</id>
        <name>2</name>
        <sequence type="described" ref="VSP_037597"/>
    </isoform>
</comment>